<protein>
    <recommendedName>
        <fullName evidence="1">Phosphomethylpyrimidine synthase</fullName>
        <ecNumber evidence="1">4.1.99.17</ecNumber>
    </recommendedName>
    <alternativeName>
        <fullName evidence="1">Hydroxymethylpyrimidine phosphate synthase</fullName>
        <shortName evidence="1">HMP-P synthase</shortName>
        <shortName evidence="1">HMP-phosphate synthase</shortName>
        <shortName evidence="1">HMPP synthase</shortName>
    </alternativeName>
    <alternativeName>
        <fullName evidence="1">Thiamine biosynthesis protein ThiC</fullName>
    </alternativeName>
</protein>
<keyword id="KW-0004">4Fe-4S</keyword>
<keyword id="KW-0408">Iron</keyword>
<keyword id="KW-0411">Iron-sulfur</keyword>
<keyword id="KW-0456">Lyase</keyword>
<keyword id="KW-0479">Metal-binding</keyword>
<keyword id="KW-0949">S-adenosyl-L-methionine</keyword>
<keyword id="KW-0784">Thiamine biosynthesis</keyword>
<keyword id="KW-0862">Zinc</keyword>
<evidence type="ECO:0000255" key="1">
    <source>
        <dbReference type="HAMAP-Rule" id="MF_00089"/>
    </source>
</evidence>
<proteinExistence type="inferred from homology"/>
<sequence length="433" mass="47654">MGIIDEAKRGQITDEMRAISKLEGIPVEKVRNRISEGKIMLIRNAKYPSRKLVPIGKGLTTKVNVNIGTSSEVVDLDMELQKVKVANKWGDTLMDLSTGGDLDAIRRDIIKASDLPVGTVPVYQIFIESFKKKSGGAYFTEDELLNTVEKHLKDGVAFMTIHAGITKDLAIRALKSDRIIPIVSRGGDMIAGWMIHNNSENPYRKNWDYVLEMFKEYDAVISLGDALRPGATGDAHDEFQIGELLETARLVKNALQKGVQVMVEGPGHVPLNEIAWDVKLMKKLTGGVPYYVLGPLPIDVGAPYDHIASAIGAAISSASGVDLLCYLTPAEHLGLPTVKQVEEGAIAYRVAAHAGDVVKLGRKARKWDDEVSYYRGKLDWENMISKLIDPQRAYQVYTQFGTPKVKACTMCGGYCPMMWAMDQVRKIGSSSSL</sequence>
<comment type="function">
    <text evidence="1">Catalyzes the synthesis of the hydroxymethylpyrimidine phosphate (HMP-P) moiety of thiamine from aminoimidazole ribotide (AIR) in a radical S-adenosyl-L-methionine (SAM)-dependent reaction.</text>
</comment>
<comment type="catalytic activity">
    <reaction evidence="1">
        <text>5-amino-1-(5-phospho-beta-D-ribosyl)imidazole + S-adenosyl-L-methionine = 4-amino-2-methyl-5-(phosphooxymethyl)pyrimidine + CO + 5'-deoxyadenosine + formate + L-methionine + 3 H(+)</text>
        <dbReference type="Rhea" id="RHEA:24840"/>
        <dbReference type="ChEBI" id="CHEBI:15378"/>
        <dbReference type="ChEBI" id="CHEBI:15740"/>
        <dbReference type="ChEBI" id="CHEBI:17245"/>
        <dbReference type="ChEBI" id="CHEBI:17319"/>
        <dbReference type="ChEBI" id="CHEBI:57844"/>
        <dbReference type="ChEBI" id="CHEBI:58354"/>
        <dbReference type="ChEBI" id="CHEBI:59789"/>
        <dbReference type="ChEBI" id="CHEBI:137981"/>
        <dbReference type="EC" id="4.1.99.17"/>
    </reaction>
</comment>
<comment type="cofactor">
    <cofactor evidence="1">
        <name>[4Fe-4S] cluster</name>
        <dbReference type="ChEBI" id="CHEBI:49883"/>
    </cofactor>
    <text evidence="1">Binds 1 [4Fe-4S] cluster per subunit. The cluster is coordinated with 3 cysteines and an exchangeable S-adenosyl-L-methionine.</text>
</comment>
<comment type="pathway">
    <text evidence="1">Cofactor biosynthesis; thiamine diphosphate biosynthesis.</text>
</comment>
<comment type="similarity">
    <text evidence="1">Belongs to the ThiC family.</text>
</comment>
<name>THIC_SACI3</name>
<organism>
    <name type="scientific">Saccharolobus islandicus (strain M.16.27)</name>
    <name type="common">Sulfolobus islandicus</name>
    <dbReference type="NCBI Taxonomy" id="427318"/>
    <lineage>
        <taxon>Archaea</taxon>
        <taxon>Thermoproteota</taxon>
        <taxon>Thermoprotei</taxon>
        <taxon>Sulfolobales</taxon>
        <taxon>Sulfolobaceae</taxon>
        <taxon>Saccharolobus</taxon>
    </lineage>
</organism>
<accession>C3N4K5</accession>
<feature type="chain" id="PRO_1000202653" description="Phosphomethylpyrimidine synthase">
    <location>
        <begin position="1"/>
        <end position="433"/>
    </location>
</feature>
<feature type="binding site" evidence="1">
    <location>
        <position position="66"/>
    </location>
    <ligand>
        <name>substrate</name>
    </ligand>
</feature>
<feature type="binding site" evidence="1">
    <location>
        <position position="94"/>
    </location>
    <ligand>
        <name>substrate</name>
    </ligand>
</feature>
<feature type="binding site" evidence="1">
    <location>
        <position position="123"/>
    </location>
    <ligand>
        <name>substrate</name>
    </ligand>
</feature>
<feature type="binding site" evidence="1">
    <location>
        <position position="162"/>
    </location>
    <ligand>
        <name>substrate</name>
    </ligand>
</feature>
<feature type="binding site" evidence="1">
    <location>
        <begin position="184"/>
        <end position="186"/>
    </location>
    <ligand>
        <name>substrate</name>
    </ligand>
</feature>
<feature type="binding site" evidence="1">
    <location>
        <begin position="225"/>
        <end position="228"/>
    </location>
    <ligand>
        <name>substrate</name>
    </ligand>
</feature>
<feature type="binding site" evidence="1">
    <location>
        <position position="264"/>
    </location>
    <ligand>
        <name>substrate</name>
    </ligand>
</feature>
<feature type="binding site" evidence="1">
    <location>
        <position position="268"/>
    </location>
    <ligand>
        <name>Zn(2+)</name>
        <dbReference type="ChEBI" id="CHEBI:29105"/>
    </ligand>
</feature>
<feature type="binding site" evidence="1">
    <location>
        <position position="291"/>
    </location>
    <ligand>
        <name>substrate</name>
    </ligand>
</feature>
<feature type="binding site" evidence="1">
    <location>
        <position position="332"/>
    </location>
    <ligand>
        <name>Zn(2+)</name>
        <dbReference type="ChEBI" id="CHEBI:29105"/>
    </ligand>
</feature>
<feature type="binding site" evidence="1">
    <location>
        <position position="408"/>
    </location>
    <ligand>
        <name>[4Fe-4S] cluster</name>
        <dbReference type="ChEBI" id="CHEBI:49883"/>
        <note>4Fe-4S-S-AdoMet</note>
    </ligand>
</feature>
<feature type="binding site" evidence="1">
    <location>
        <position position="411"/>
    </location>
    <ligand>
        <name>[4Fe-4S] cluster</name>
        <dbReference type="ChEBI" id="CHEBI:49883"/>
        <note>4Fe-4S-S-AdoMet</note>
    </ligand>
</feature>
<feature type="binding site" evidence="1">
    <location>
        <position position="415"/>
    </location>
    <ligand>
        <name>[4Fe-4S] cluster</name>
        <dbReference type="ChEBI" id="CHEBI:49883"/>
        <note>4Fe-4S-S-AdoMet</note>
    </ligand>
</feature>
<gene>
    <name evidence="1" type="primary">thiC</name>
    <name type="ordered locus">M1627_1010</name>
</gene>
<dbReference type="EC" id="4.1.99.17" evidence="1"/>
<dbReference type="EMBL" id="CP001401">
    <property type="protein sequence ID" value="ACP54930.1"/>
    <property type="molecule type" value="Genomic_DNA"/>
</dbReference>
<dbReference type="RefSeq" id="WP_012718704.1">
    <property type="nucleotide sequence ID" value="NC_012632.1"/>
</dbReference>
<dbReference type="SMR" id="C3N4K5"/>
<dbReference type="GeneID" id="7812369"/>
<dbReference type="KEGG" id="sim:M1627_1010"/>
<dbReference type="HOGENOM" id="CLU_013181_2_2_2"/>
<dbReference type="UniPathway" id="UPA00060"/>
<dbReference type="Proteomes" id="UP000002307">
    <property type="component" value="Chromosome"/>
</dbReference>
<dbReference type="GO" id="GO:0051539">
    <property type="term" value="F:4 iron, 4 sulfur cluster binding"/>
    <property type="evidence" value="ECO:0007669"/>
    <property type="project" value="UniProtKB-KW"/>
</dbReference>
<dbReference type="GO" id="GO:0016830">
    <property type="term" value="F:carbon-carbon lyase activity"/>
    <property type="evidence" value="ECO:0007669"/>
    <property type="project" value="InterPro"/>
</dbReference>
<dbReference type="GO" id="GO:0008270">
    <property type="term" value="F:zinc ion binding"/>
    <property type="evidence" value="ECO:0007669"/>
    <property type="project" value="UniProtKB-UniRule"/>
</dbReference>
<dbReference type="GO" id="GO:0009228">
    <property type="term" value="P:thiamine biosynthetic process"/>
    <property type="evidence" value="ECO:0007669"/>
    <property type="project" value="UniProtKB-KW"/>
</dbReference>
<dbReference type="GO" id="GO:0009229">
    <property type="term" value="P:thiamine diphosphate biosynthetic process"/>
    <property type="evidence" value="ECO:0007669"/>
    <property type="project" value="UniProtKB-UniRule"/>
</dbReference>
<dbReference type="Gene3D" id="3.20.20.540">
    <property type="entry name" value="Radical SAM ThiC family, central domain"/>
    <property type="match status" value="1"/>
</dbReference>
<dbReference type="HAMAP" id="MF_00089">
    <property type="entry name" value="ThiC"/>
    <property type="match status" value="1"/>
</dbReference>
<dbReference type="InterPro" id="IPR037509">
    <property type="entry name" value="ThiC"/>
</dbReference>
<dbReference type="InterPro" id="IPR038521">
    <property type="entry name" value="ThiC/Bza_core_dom"/>
</dbReference>
<dbReference type="InterPro" id="IPR002817">
    <property type="entry name" value="ThiC/BzaA/B"/>
</dbReference>
<dbReference type="NCBIfam" id="NF009895">
    <property type="entry name" value="PRK13352.1"/>
    <property type="match status" value="1"/>
</dbReference>
<dbReference type="NCBIfam" id="TIGR00190">
    <property type="entry name" value="thiC"/>
    <property type="match status" value="1"/>
</dbReference>
<dbReference type="PANTHER" id="PTHR30557:SF1">
    <property type="entry name" value="PHOSPHOMETHYLPYRIMIDINE SYNTHASE, CHLOROPLASTIC"/>
    <property type="match status" value="1"/>
</dbReference>
<dbReference type="PANTHER" id="PTHR30557">
    <property type="entry name" value="THIAMINE BIOSYNTHESIS PROTEIN THIC"/>
    <property type="match status" value="1"/>
</dbReference>
<dbReference type="Pfam" id="PF01964">
    <property type="entry name" value="ThiC_Rad_SAM"/>
    <property type="match status" value="1"/>
</dbReference>
<dbReference type="SFLD" id="SFLDF00407">
    <property type="entry name" value="phosphomethylpyrimidine_syntha"/>
    <property type="match status" value="1"/>
</dbReference>
<dbReference type="SFLD" id="SFLDS00113">
    <property type="entry name" value="Radical_SAM_Phosphomethylpyrim"/>
    <property type="match status" value="1"/>
</dbReference>
<reference key="1">
    <citation type="journal article" date="2009" name="Proc. Natl. Acad. Sci. U.S.A.">
        <title>Biogeography of the Sulfolobus islandicus pan-genome.</title>
        <authorList>
            <person name="Reno M.L."/>
            <person name="Held N.L."/>
            <person name="Fields C.J."/>
            <person name="Burke P.V."/>
            <person name="Whitaker R.J."/>
        </authorList>
    </citation>
    <scope>NUCLEOTIDE SEQUENCE [LARGE SCALE GENOMIC DNA]</scope>
    <source>
        <strain>M.16.27</strain>
    </source>
</reference>